<keyword id="KW-0004">4Fe-4S</keyword>
<keyword id="KW-0997">Cell inner membrane</keyword>
<keyword id="KW-1003">Cell membrane</keyword>
<keyword id="KW-0408">Iron</keyword>
<keyword id="KW-0411">Iron-sulfur</keyword>
<keyword id="KW-0472">Membrane</keyword>
<keyword id="KW-0479">Metal-binding</keyword>
<keyword id="KW-0520">NAD</keyword>
<keyword id="KW-0874">Quinone</keyword>
<keyword id="KW-1278">Translocase</keyword>
<keyword id="KW-0813">Transport</keyword>
<keyword id="KW-0830">Ubiquinone</keyword>
<feature type="chain" id="PRO_0000376366" description="NADH-quinone oxidoreductase subunit B">
    <location>
        <begin position="1"/>
        <end position="220"/>
    </location>
</feature>
<feature type="binding site" evidence="1">
    <location>
        <position position="63"/>
    </location>
    <ligand>
        <name>[4Fe-4S] cluster</name>
        <dbReference type="ChEBI" id="CHEBI:49883"/>
    </ligand>
</feature>
<feature type="binding site" evidence="1">
    <location>
        <position position="64"/>
    </location>
    <ligand>
        <name>[4Fe-4S] cluster</name>
        <dbReference type="ChEBI" id="CHEBI:49883"/>
    </ligand>
</feature>
<feature type="binding site" evidence="1">
    <location>
        <position position="129"/>
    </location>
    <ligand>
        <name>[4Fe-4S] cluster</name>
        <dbReference type="ChEBI" id="CHEBI:49883"/>
    </ligand>
</feature>
<feature type="binding site" evidence="1">
    <location>
        <position position="158"/>
    </location>
    <ligand>
        <name>[4Fe-4S] cluster</name>
        <dbReference type="ChEBI" id="CHEBI:49883"/>
    </ligand>
</feature>
<accession>B4SYZ8</accession>
<reference key="1">
    <citation type="journal article" date="2011" name="J. Bacteriol.">
        <title>Comparative genomics of 28 Salmonella enterica isolates: evidence for CRISPR-mediated adaptive sublineage evolution.</title>
        <authorList>
            <person name="Fricke W.F."/>
            <person name="Mammel M.K."/>
            <person name="McDermott P.F."/>
            <person name="Tartera C."/>
            <person name="White D.G."/>
            <person name="Leclerc J.E."/>
            <person name="Ravel J."/>
            <person name="Cebula T.A."/>
        </authorList>
    </citation>
    <scope>NUCLEOTIDE SEQUENCE [LARGE SCALE GENOMIC DNA]</scope>
    <source>
        <strain>SL254</strain>
    </source>
</reference>
<evidence type="ECO:0000255" key="1">
    <source>
        <dbReference type="HAMAP-Rule" id="MF_01356"/>
    </source>
</evidence>
<sequence length="220" mass="25089">MDYTLTRIDPNGENDRYPLQKQEIVTDPLEQEVNKNVFMGKLHDMVNWGRKNSIWPYNFGLSCCYVEMVTSFTAVHDVARFGAEVLRASPRQADLMVVAGTCFTKMAPVIQRLYDQMLEPKWVISMGACANSGGMYDIYSVVQGVDKFIPVDVYIPGCPPRPEAYMQALMLLQESIGKERRPLSWVVGDQGVYRANMQPERERKRGERIAVTNLRTPDEI</sequence>
<dbReference type="EC" id="7.1.1.-" evidence="1"/>
<dbReference type="EMBL" id="CP001113">
    <property type="protein sequence ID" value="ACF62040.1"/>
    <property type="molecule type" value="Genomic_DNA"/>
</dbReference>
<dbReference type="RefSeq" id="WP_000386728.1">
    <property type="nucleotide sequence ID" value="NZ_CCMR01000001.1"/>
</dbReference>
<dbReference type="SMR" id="B4SYZ8"/>
<dbReference type="KEGG" id="see:SNSL254_A2511"/>
<dbReference type="HOGENOM" id="CLU_055737_7_3_6"/>
<dbReference type="Proteomes" id="UP000008824">
    <property type="component" value="Chromosome"/>
</dbReference>
<dbReference type="GO" id="GO:0005886">
    <property type="term" value="C:plasma membrane"/>
    <property type="evidence" value="ECO:0007669"/>
    <property type="project" value="UniProtKB-SubCell"/>
</dbReference>
<dbReference type="GO" id="GO:0045271">
    <property type="term" value="C:respiratory chain complex I"/>
    <property type="evidence" value="ECO:0007669"/>
    <property type="project" value="TreeGrafter"/>
</dbReference>
<dbReference type="GO" id="GO:0051539">
    <property type="term" value="F:4 iron, 4 sulfur cluster binding"/>
    <property type="evidence" value="ECO:0007669"/>
    <property type="project" value="UniProtKB-KW"/>
</dbReference>
<dbReference type="GO" id="GO:0005506">
    <property type="term" value="F:iron ion binding"/>
    <property type="evidence" value="ECO:0007669"/>
    <property type="project" value="UniProtKB-UniRule"/>
</dbReference>
<dbReference type="GO" id="GO:0008137">
    <property type="term" value="F:NADH dehydrogenase (ubiquinone) activity"/>
    <property type="evidence" value="ECO:0007669"/>
    <property type="project" value="InterPro"/>
</dbReference>
<dbReference type="GO" id="GO:0050136">
    <property type="term" value="F:NADH:ubiquinone reductase (non-electrogenic) activity"/>
    <property type="evidence" value="ECO:0007669"/>
    <property type="project" value="UniProtKB-UniRule"/>
</dbReference>
<dbReference type="GO" id="GO:0048038">
    <property type="term" value="F:quinone binding"/>
    <property type="evidence" value="ECO:0007669"/>
    <property type="project" value="UniProtKB-KW"/>
</dbReference>
<dbReference type="GO" id="GO:0009060">
    <property type="term" value="P:aerobic respiration"/>
    <property type="evidence" value="ECO:0007669"/>
    <property type="project" value="TreeGrafter"/>
</dbReference>
<dbReference type="GO" id="GO:0015990">
    <property type="term" value="P:electron transport coupled proton transport"/>
    <property type="evidence" value="ECO:0007669"/>
    <property type="project" value="TreeGrafter"/>
</dbReference>
<dbReference type="FunFam" id="3.40.50.12280:FF:000002">
    <property type="entry name" value="NADH-quinone oxidoreductase subunit B"/>
    <property type="match status" value="1"/>
</dbReference>
<dbReference type="Gene3D" id="3.40.50.12280">
    <property type="match status" value="1"/>
</dbReference>
<dbReference type="HAMAP" id="MF_01356">
    <property type="entry name" value="NDH1_NuoB"/>
    <property type="match status" value="1"/>
</dbReference>
<dbReference type="InterPro" id="IPR006137">
    <property type="entry name" value="NADH_UbQ_OxRdtase-like_20kDa"/>
</dbReference>
<dbReference type="InterPro" id="IPR006138">
    <property type="entry name" value="NADH_UQ_OxRdtase_20Kd_su"/>
</dbReference>
<dbReference type="NCBIfam" id="TIGR01957">
    <property type="entry name" value="nuoB_fam"/>
    <property type="match status" value="1"/>
</dbReference>
<dbReference type="NCBIfam" id="NF005012">
    <property type="entry name" value="PRK06411.1"/>
    <property type="match status" value="1"/>
</dbReference>
<dbReference type="PANTHER" id="PTHR11995">
    <property type="entry name" value="NADH DEHYDROGENASE"/>
    <property type="match status" value="1"/>
</dbReference>
<dbReference type="PANTHER" id="PTHR11995:SF14">
    <property type="entry name" value="NADH DEHYDROGENASE [UBIQUINONE] IRON-SULFUR PROTEIN 7, MITOCHONDRIAL"/>
    <property type="match status" value="1"/>
</dbReference>
<dbReference type="Pfam" id="PF01058">
    <property type="entry name" value="Oxidored_q6"/>
    <property type="match status" value="1"/>
</dbReference>
<dbReference type="SUPFAM" id="SSF56770">
    <property type="entry name" value="HydA/Nqo6-like"/>
    <property type="match status" value="1"/>
</dbReference>
<dbReference type="PROSITE" id="PS01150">
    <property type="entry name" value="COMPLEX1_20K"/>
    <property type="match status" value="1"/>
</dbReference>
<comment type="function">
    <text evidence="1">NDH-1 shuttles electrons from NADH, via FMN and iron-sulfur (Fe-S) centers, to quinones in the respiratory chain. The immediate electron acceptor for the enzyme in this species is believed to be ubiquinone. Couples the redox reaction to proton translocation (for every two electrons transferred, four hydrogen ions are translocated across the cytoplasmic membrane), and thus conserves the redox energy in a proton gradient.</text>
</comment>
<comment type="catalytic activity">
    <reaction evidence="1">
        <text>a quinone + NADH + 5 H(+)(in) = a quinol + NAD(+) + 4 H(+)(out)</text>
        <dbReference type="Rhea" id="RHEA:57888"/>
        <dbReference type="ChEBI" id="CHEBI:15378"/>
        <dbReference type="ChEBI" id="CHEBI:24646"/>
        <dbReference type="ChEBI" id="CHEBI:57540"/>
        <dbReference type="ChEBI" id="CHEBI:57945"/>
        <dbReference type="ChEBI" id="CHEBI:132124"/>
    </reaction>
</comment>
<comment type="cofactor">
    <cofactor evidence="1">
        <name>[4Fe-4S] cluster</name>
        <dbReference type="ChEBI" id="CHEBI:49883"/>
    </cofactor>
    <text evidence="1">Binds 1 [4Fe-4S] cluster.</text>
</comment>
<comment type="subunit">
    <text evidence="1">NDH-1 is composed of 13 different subunits. Subunits NuoB, CD, E, F, and G constitute the peripheral sector of the complex.</text>
</comment>
<comment type="subcellular location">
    <subcellularLocation>
        <location evidence="1">Cell inner membrane</location>
        <topology evidence="1">Peripheral membrane protein</topology>
        <orientation evidence="1">Cytoplasmic side</orientation>
    </subcellularLocation>
</comment>
<comment type="similarity">
    <text evidence="1">Belongs to the complex I 20 kDa subunit family.</text>
</comment>
<organism>
    <name type="scientific">Salmonella newport (strain SL254)</name>
    <dbReference type="NCBI Taxonomy" id="423368"/>
    <lineage>
        <taxon>Bacteria</taxon>
        <taxon>Pseudomonadati</taxon>
        <taxon>Pseudomonadota</taxon>
        <taxon>Gammaproteobacteria</taxon>
        <taxon>Enterobacterales</taxon>
        <taxon>Enterobacteriaceae</taxon>
        <taxon>Salmonella</taxon>
    </lineage>
</organism>
<proteinExistence type="inferred from homology"/>
<protein>
    <recommendedName>
        <fullName evidence="1">NADH-quinone oxidoreductase subunit B</fullName>
        <ecNumber evidence="1">7.1.1.-</ecNumber>
    </recommendedName>
    <alternativeName>
        <fullName evidence="1">NADH dehydrogenase I subunit B</fullName>
    </alternativeName>
    <alternativeName>
        <fullName evidence="1">NDH-1 subunit B</fullName>
    </alternativeName>
</protein>
<name>NUOB_SALNS</name>
<gene>
    <name evidence="1" type="primary">nuoB</name>
    <name type="ordered locus">SNSL254_A2511</name>
</gene>